<reference key="1">
    <citation type="journal article" date="2008" name="Chem. Biol.">
        <title>Characterization of the azinomycin B biosynthetic gene cluster revealing a different iterative type I polyketide synthase for naphthoate biosynthesis.</title>
        <authorList>
            <person name="Zhao Q."/>
            <person name="He Q."/>
            <person name="Ding W."/>
            <person name="Tang M."/>
            <person name="Kang Q."/>
            <person name="Yu Y."/>
            <person name="Deng W."/>
            <person name="Zhang Q."/>
            <person name="Fang J."/>
            <person name="Tang G."/>
            <person name="Liu W."/>
        </authorList>
    </citation>
    <scope>NUCLEOTIDE SEQUENCE [GENOMIC DNA]</scope>
    <scope>PATHWAY</scope>
    <scope>FUNCTION</scope>
    <scope>CATALYTIC ACTIVITY</scope>
    <source>
        <strain>ATCC 33158 / NBRC 13928 / NRRL 2485</strain>
    </source>
</reference>
<proteinExistence type="evidence at protein level"/>
<gene>
    <name evidence="6" type="primary">aziB</name>
    <name evidence="8" type="synonym">azi26</name>
</gene>
<name>AZIB_STREG</name>
<organism>
    <name type="scientific">Streptomyces sahachiroi</name>
    <dbReference type="NCBI Taxonomy" id="285525"/>
    <lineage>
        <taxon>Bacteria</taxon>
        <taxon>Bacillati</taxon>
        <taxon>Actinomycetota</taxon>
        <taxon>Actinomycetes</taxon>
        <taxon>Kitasatosporales</taxon>
        <taxon>Streptomycetaceae</taxon>
        <taxon>Streptomyces</taxon>
    </lineage>
</organism>
<accession>B4XYB8</accession>
<dbReference type="EC" id="2.3.1.236" evidence="5"/>
<dbReference type="EMBL" id="EU240558">
    <property type="protein sequence ID" value="ABY83164.1"/>
    <property type="molecule type" value="Genomic_DNA"/>
</dbReference>
<dbReference type="SMR" id="B4XYB8"/>
<dbReference type="KEGG" id="ag:ABY83164"/>
<dbReference type="BRENDA" id="2.3.1.236">
    <property type="organism ID" value="13388"/>
</dbReference>
<dbReference type="GO" id="GO:0005737">
    <property type="term" value="C:cytoplasm"/>
    <property type="evidence" value="ECO:0007669"/>
    <property type="project" value="TreeGrafter"/>
</dbReference>
<dbReference type="GO" id="GO:0005886">
    <property type="term" value="C:plasma membrane"/>
    <property type="evidence" value="ECO:0007669"/>
    <property type="project" value="TreeGrafter"/>
</dbReference>
<dbReference type="GO" id="GO:0004312">
    <property type="term" value="F:fatty acid synthase activity"/>
    <property type="evidence" value="ECO:0007669"/>
    <property type="project" value="TreeGrafter"/>
</dbReference>
<dbReference type="GO" id="GO:0031177">
    <property type="term" value="F:phosphopantetheine binding"/>
    <property type="evidence" value="ECO:0007669"/>
    <property type="project" value="InterPro"/>
</dbReference>
<dbReference type="GO" id="GO:0017000">
    <property type="term" value="P:antibiotic biosynthetic process"/>
    <property type="evidence" value="ECO:0007669"/>
    <property type="project" value="UniProtKB-KW"/>
</dbReference>
<dbReference type="GO" id="GO:0071770">
    <property type="term" value="P:DIM/DIP cell wall layer assembly"/>
    <property type="evidence" value="ECO:0007669"/>
    <property type="project" value="TreeGrafter"/>
</dbReference>
<dbReference type="GO" id="GO:0006633">
    <property type="term" value="P:fatty acid biosynthetic process"/>
    <property type="evidence" value="ECO:0007669"/>
    <property type="project" value="TreeGrafter"/>
</dbReference>
<dbReference type="GO" id="GO:0044550">
    <property type="term" value="P:secondary metabolite biosynthetic process"/>
    <property type="evidence" value="ECO:0007669"/>
    <property type="project" value="UniProtKB-ARBA"/>
</dbReference>
<dbReference type="CDD" id="cd08955">
    <property type="entry name" value="KR_2_FAS_SDR_x"/>
    <property type="match status" value="1"/>
</dbReference>
<dbReference type="CDD" id="cd00833">
    <property type="entry name" value="PKS"/>
    <property type="match status" value="1"/>
</dbReference>
<dbReference type="Gene3D" id="3.40.47.10">
    <property type="match status" value="1"/>
</dbReference>
<dbReference type="Gene3D" id="1.10.1200.10">
    <property type="entry name" value="ACP-like"/>
    <property type="match status" value="1"/>
</dbReference>
<dbReference type="Gene3D" id="3.30.70.250">
    <property type="entry name" value="Malonyl-CoA ACP transacylase, ACP-binding"/>
    <property type="match status" value="1"/>
</dbReference>
<dbReference type="Gene3D" id="3.40.366.10">
    <property type="entry name" value="Malonyl-Coenzyme A Acyl Carrier Protein, domain 2"/>
    <property type="match status" value="1"/>
</dbReference>
<dbReference type="Gene3D" id="3.40.50.720">
    <property type="entry name" value="NAD(P)-binding Rossmann-like Domain"/>
    <property type="match status" value="1"/>
</dbReference>
<dbReference type="Gene3D" id="3.10.129.110">
    <property type="entry name" value="Polyketide synthase dehydratase"/>
    <property type="match status" value="1"/>
</dbReference>
<dbReference type="InterPro" id="IPR001227">
    <property type="entry name" value="Ac_transferase_dom_sf"/>
</dbReference>
<dbReference type="InterPro" id="IPR036736">
    <property type="entry name" value="ACP-like_sf"/>
</dbReference>
<dbReference type="InterPro" id="IPR014043">
    <property type="entry name" value="Acyl_transferase_dom"/>
</dbReference>
<dbReference type="InterPro" id="IPR016035">
    <property type="entry name" value="Acyl_Trfase/lysoPLipase"/>
</dbReference>
<dbReference type="InterPro" id="IPR014031">
    <property type="entry name" value="Ketoacyl_synth_C"/>
</dbReference>
<dbReference type="InterPro" id="IPR014030">
    <property type="entry name" value="Ketoacyl_synth_N"/>
</dbReference>
<dbReference type="InterPro" id="IPR016036">
    <property type="entry name" value="Malonyl_transacylase_ACP-bd"/>
</dbReference>
<dbReference type="InterPro" id="IPR036291">
    <property type="entry name" value="NAD(P)-bd_dom_sf"/>
</dbReference>
<dbReference type="InterPro" id="IPR032821">
    <property type="entry name" value="PKS_assoc"/>
</dbReference>
<dbReference type="InterPro" id="IPR020841">
    <property type="entry name" value="PKS_Beta-ketoAc_synthase_dom"/>
</dbReference>
<dbReference type="InterPro" id="IPR042104">
    <property type="entry name" value="PKS_dehydratase_sf"/>
</dbReference>
<dbReference type="InterPro" id="IPR020807">
    <property type="entry name" value="PKS_DH"/>
</dbReference>
<dbReference type="InterPro" id="IPR049552">
    <property type="entry name" value="PKS_DH_N"/>
</dbReference>
<dbReference type="InterPro" id="IPR013968">
    <property type="entry name" value="PKS_KR"/>
</dbReference>
<dbReference type="InterPro" id="IPR049900">
    <property type="entry name" value="PKS_mFAS_DH"/>
</dbReference>
<dbReference type="InterPro" id="IPR050091">
    <property type="entry name" value="PKS_NRPS_Biosynth_Enz"/>
</dbReference>
<dbReference type="InterPro" id="IPR020806">
    <property type="entry name" value="PKS_PP-bd"/>
</dbReference>
<dbReference type="InterPro" id="IPR009081">
    <property type="entry name" value="PP-bd_ACP"/>
</dbReference>
<dbReference type="InterPro" id="IPR006162">
    <property type="entry name" value="Ppantetheine_attach_site"/>
</dbReference>
<dbReference type="InterPro" id="IPR016039">
    <property type="entry name" value="Thiolase-like"/>
</dbReference>
<dbReference type="PANTHER" id="PTHR43775">
    <property type="entry name" value="FATTY ACID SYNTHASE"/>
    <property type="match status" value="1"/>
</dbReference>
<dbReference type="PANTHER" id="PTHR43775:SF37">
    <property type="entry name" value="SI:DKEY-61P9.11"/>
    <property type="match status" value="1"/>
</dbReference>
<dbReference type="Pfam" id="PF00698">
    <property type="entry name" value="Acyl_transf_1"/>
    <property type="match status" value="1"/>
</dbReference>
<dbReference type="Pfam" id="PF16197">
    <property type="entry name" value="KAsynt_C_assoc"/>
    <property type="match status" value="1"/>
</dbReference>
<dbReference type="Pfam" id="PF00109">
    <property type="entry name" value="ketoacyl-synt"/>
    <property type="match status" value="1"/>
</dbReference>
<dbReference type="Pfam" id="PF02801">
    <property type="entry name" value="Ketoacyl-synt_C"/>
    <property type="match status" value="1"/>
</dbReference>
<dbReference type="Pfam" id="PF08659">
    <property type="entry name" value="KR"/>
    <property type="match status" value="1"/>
</dbReference>
<dbReference type="Pfam" id="PF21089">
    <property type="entry name" value="PKS_DH_N"/>
    <property type="match status" value="1"/>
</dbReference>
<dbReference type="Pfam" id="PF00550">
    <property type="entry name" value="PP-binding"/>
    <property type="match status" value="1"/>
</dbReference>
<dbReference type="SMART" id="SM00827">
    <property type="entry name" value="PKS_AT"/>
    <property type="match status" value="1"/>
</dbReference>
<dbReference type="SMART" id="SM00826">
    <property type="entry name" value="PKS_DH"/>
    <property type="match status" value="1"/>
</dbReference>
<dbReference type="SMART" id="SM00822">
    <property type="entry name" value="PKS_KR"/>
    <property type="match status" value="1"/>
</dbReference>
<dbReference type="SMART" id="SM00825">
    <property type="entry name" value="PKS_KS"/>
    <property type="match status" value="1"/>
</dbReference>
<dbReference type="SMART" id="SM00823">
    <property type="entry name" value="PKS_PP"/>
    <property type="match status" value="1"/>
</dbReference>
<dbReference type="SMART" id="SM01294">
    <property type="entry name" value="PKS_PP_betabranch"/>
    <property type="match status" value="1"/>
</dbReference>
<dbReference type="SUPFAM" id="SSF47336">
    <property type="entry name" value="ACP-like"/>
    <property type="match status" value="1"/>
</dbReference>
<dbReference type="SUPFAM" id="SSF52151">
    <property type="entry name" value="FabD/lysophospholipase-like"/>
    <property type="match status" value="1"/>
</dbReference>
<dbReference type="SUPFAM" id="SSF51735">
    <property type="entry name" value="NAD(P)-binding Rossmann-fold domains"/>
    <property type="match status" value="2"/>
</dbReference>
<dbReference type="SUPFAM" id="SSF55048">
    <property type="entry name" value="Probable ACP-binding domain of malonyl-CoA ACP transacylase"/>
    <property type="match status" value="1"/>
</dbReference>
<dbReference type="SUPFAM" id="SSF53901">
    <property type="entry name" value="Thiolase-like"/>
    <property type="match status" value="1"/>
</dbReference>
<dbReference type="PROSITE" id="PS50075">
    <property type="entry name" value="CARRIER"/>
    <property type="match status" value="1"/>
</dbReference>
<dbReference type="PROSITE" id="PS52004">
    <property type="entry name" value="KS3_2"/>
    <property type="match status" value="1"/>
</dbReference>
<dbReference type="PROSITE" id="PS00012">
    <property type="entry name" value="PHOSPHOPANTETHEINE"/>
    <property type="match status" value="1"/>
</dbReference>
<dbReference type="PROSITE" id="PS52019">
    <property type="entry name" value="PKS_MFAS_DH"/>
    <property type="match status" value="1"/>
</dbReference>
<feature type="chain" id="PRO_0000430810" description="5-methyl-1-naphthoate synthase">
    <location>
        <begin position="1"/>
        <end position="1779"/>
    </location>
</feature>
<feature type="domain" description="Ketosynthase family 3 (KS3)" evidence="2">
    <location>
        <begin position="10"/>
        <end position="433"/>
    </location>
</feature>
<feature type="domain" description="PKS/mFAS DH" evidence="3">
    <location>
        <begin position="902"/>
        <end position="1180"/>
    </location>
</feature>
<feature type="domain" description="Carrier" evidence="1">
    <location>
        <begin position="1664"/>
        <end position="1742"/>
    </location>
</feature>
<feature type="region of interest" description="N-terminal hotdog fold" evidence="3">
    <location>
        <begin position="902"/>
        <end position="1027"/>
    </location>
</feature>
<feature type="region of interest" description="C-terminal hotdog fold" evidence="3">
    <location>
        <begin position="1042"/>
        <end position="1180"/>
    </location>
</feature>
<feature type="region of interest" description="Disordered" evidence="4">
    <location>
        <begin position="1746"/>
        <end position="1771"/>
    </location>
</feature>
<feature type="active site" description="For beta-ketoacyl synthase activity" evidence="2">
    <location>
        <position position="181"/>
    </location>
</feature>
<feature type="active site" description="For beta-ketoacyl synthase activity" evidence="2">
    <location>
        <position position="316"/>
    </location>
</feature>
<feature type="active site" description="For beta-ketoacyl synthase activity" evidence="2">
    <location>
        <position position="356"/>
    </location>
</feature>
<feature type="modified residue" description="O-(pantetheine 4'-phosphoryl)serine" evidence="1">
    <location>
        <position position="1702"/>
    </location>
</feature>
<evidence type="ECO:0000255" key="1">
    <source>
        <dbReference type="PROSITE-ProRule" id="PRU00258"/>
    </source>
</evidence>
<evidence type="ECO:0000255" key="2">
    <source>
        <dbReference type="PROSITE-ProRule" id="PRU01348"/>
    </source>
</evidence>
<evidence type="ECO:0000255" key="3">
    <source>
        <dbReference type="PROSITE-ProRule" id="PRU01363"/>
    </source>
</evidence>
<evidence type="ECO:0000256" key="4">
    <source>
        <dbReference type="SAM" id="MobiDB-lite"/>
    </source>
</evidence>
<evidence type="ECO:0000269" key="5">
    <source>
    </source>
</evidence>
<evidence type="ECO:0000303" key="6">
    <source>
    </source>
</evidence>
<evidence type="ECO:0000305" key="7"/>
<evidence type="ECO:0000312" key="8">
    <source>
        <dbReference type="EMBL" id="ABY83164.1"/>
    </source>
</evidence>
<sequence>MAENVQNPPVEPLAVIGMSCRFAPDLDTPGRLWEFLRAGGSAVGEMPDRRWDPYVTDSRTRDILRTTTRKGSFMRDIEGFDAEFFQITPREAEYIDPQQRIMLELAWEALCDAGLPPTSLAGTDASVYVAANSNDYGRRLLEDLDRTGAWAVNGTTFYGIANRISYFLDAHGPSMAVDTACAGSLTALHVAGQALHRGETSVAIVGGINIMASPALVVALDAASATSPDGRSKSFDKAADGYGRGEGGGVVVLKRLSDAVRDGDPVHGLVLASGVFQDGRSDGMMAPNGSAQQRMLEEIYRRSGIDPGTVQYVEAHGTGTQLGDAAEAQAIGNVFGPGRDGDNPLLIGTLKPNVGHVEAASGIAGVIKVLLGMRHGELPPSPHEEPDPGLGLEARGLRLVAEPTPWPRGEHGMRAGVSSYGVGGSIAHAVLQQAPPRPDRTERPAAAATGRPQVFPLSAASEQGVRGLAGSVAAWLRAHPETALDDLAHTFTARRSHLSRRAAVVAGTTEELLGGLDALAGGEKSPAVALASASGFGDGGAAGPAWVFSGHGAQWSGMGRELLTTEPVFAQVIDELAPVFSEELGWTPREAIEAGGPWTVVRTQAMTFAMQVALAEVWSDLGLRPGAIIGHSVGEIAAAAVAGSLDRAEAARFACRRARALGKIAGRGAMAMVPMAFADVEQRVAGRDAVVAAIAASPLSTVVSGDTAAVEALLADLEADGIQARRVNTDVAFHSPHVQEILDEVRQAAAALRAGTPRVTLYSTALADPRSDAPREGEYWATNLADPVRFHQAVRAALDDGTRVFLEVSSHPVVAHSITETALDAGVPDAHVAITLRREQPEQRTVLANLARLHSLGTPVTWSYDGDLVDVPAVRWQHKPYWIFPDTAPEQGAGLGHDPQTHTLIGARTTVASAPVQRVWQTELHMENRPYAQSHKVVGVETVPASVVLNSFITAATNEGERACGLRDIVFRIPLAAHPTRVVQVVLEQDKVRIASRIKRDQESGGVRDDEWLTHTTATVVHEPEVGARPMEDPDVIRARCPVSWTWAKVDGIFRTMGVDGYTFPWVVEELLRGEDEQFSTITVDHTPKLHPSSWTAVVDAALTASGVLVMDENSNVLRTCSHLESLSFVGPPPPRIHVHTVRDPRTPDTISMTVADESGAVVCEARGLRYVKVQDIGSGAVGPRDLVHELAWEPVEVPADAPVPSQALVVGGAAGGPALVEALTARGVRARAVPDATAIGDASLTCADVVVVAPEALLPGEAPEQAARRCAQLLVDAVQQVAAVPDERRRPRVWALTREVRAGATEAALAHAPLWGAGRIVAGERPDLWGGVIDVAENAVPQQVASLIGALPHTEDVLSLDSEGVTAARLRQVARPAEREPVDCRPDGTYLVTGGLGALGLEAARHLVEQGARRLVLIGRRGLPSRSRWDQVDDPAVAAQIAEVVALEAAGATVRVLSLDISDAEATARALDPGALDMPPVRGIVHCAGVVSDALVEKTGAANLDTTMGPKADGAMVLHRLFPAGTLDFFTMFSSCGQLARLTGQVSYASANSFLDALAALRRSRGETGTTSFAWAQWIGRGMGETTGRATILEAESRGLGGITVSEALRSWAYADRFALPYAAVMRVMPDHTLPVFSHLSVTDAGAQSADAGGVDWATVPAGELPELVLKVTHEQVAAELNLAVDDIAIDQPLLELGVDSVLTVALRVRLHRCFAVDLPPTILWSNPTVRALAEFLAAEVGGATADAEETDPVAGLPAPQQGSGTAEQLDAVAAAAG</sequence>
<protein>
    <recommendedName>
        <fullName evidence="7">5-methyl-1-naphthoate synthase</fullName>
        <ecNumber evidence="5">2.3.1.236</ecNumber>
    </recommendedName>
    <alternativeName>
        <fullName evidence="7">Azinomycin biosynthesis protein B</fullName>
    </alternativeName>
</protein>
<keyword id="KW-0045">Antibiotic biosynthesis</keyword>
<keyword id="KW-0521">NADP</keyword>
<keyword id="KW-0596">Phosphopantetheine</keyword>
<keyword id="KW-0597">Phosphoprotein</keyword>
<keyword id="KW-0808">Transferase</keyword>
<comment type="function">
    <text evidence="5">Polyketide synthase that catalyzes the biosynthesis of the bicyclic aromatic compound 5-methyl-1-naphthoate in the biosynthesis of the antitumor antibiotic azinomycin B.</text>
</comment>
<comment type="catalytic activity">
    <reaction evidence="5">
        <text>5 malonyl-CoA + acetyl-CoA + 3 NADPH + 7 H(+) = 5-methyl-1-naphthoate + 5 CO2 + 3 NADP(+) + 6 CoA + 4 H2O</text>
        <dbReference type="Rhea" id="RHEA:42836"/>
        <dbReference type="ChEBI" id="CHEBI:15377"/>
        <dbReference type="ChEBI" id="CHEBI:15378"/>
        <dbReference type="ChEBI" id="CHEBI:16526"/>
        <dbReference type="ChEBI" id="CHEBI:57287"/>
        <dbReference type="ChEBI" id="CHEBI:57288"/>
        <dbReference type="ChEBI" id="CHEBI:57384"/>
        <dbReference type="ChEBI" id="CHEBI:57783"/>
        <dbReference type="ChEBI" id="CHEBI:58349"/>
        <dbReference type="ChEBI" id="CHEBI:78251"/>
        <dbReference type="EC" id="2.3.1.236"/>
    </reaction>
</comment>
<comment type="pathway">
    <text evidence="6">Antibiotic biosynthesis.</text>
</comment>